<protein>
    <recommendedName>
        <fullName evidence="1">Glutamate-1-semialdehyde 2,1-aminomutase</fullName>
        <shortName evidence="1">GSA</shortName>
        <ecNumber evidence="1">5.4.3.8</ecNumber>
    </recommendedName>
    <alternativeName>
        <fullName evidence="1">Glutamate-1-semialdehyde aminotransferase</fullName>
        <shortName evidence="1">GSA-AT</shortName>
    </alternativeName>
</protein>
<proteinExistence type="inferred from homology"/>
<reference key="1">
    <citation type="journal article" date="2009" name="PLoS Genet.">
        <title>Organised genome dynamics in the Escherichia coli species results in highly diverse adaptive paths.</title>
        <authorList>
            <person name="Touchon M."/>
            <person name="Hoede C."/>
            <person name="Tenaillon O."/>
            <person name="Barbe V."/>
            <person name="Baeriswyl S."/>
            <person name="Bidet P."/>
            <person name="Bingen E."/>
            <person name="Bonacorsi S."/>
            <person name="Bouchier C."/>
            <person name="Bouvet O."/>
            <person name="Calteau A."/>
            <person name="Chiapello H."/>
            <person name="Clermont O."/>
            <person name="Cruveiller S."/>
            <person name="Danchin A."/>
            <person name="Diard M."/>
            <person name="Dossat C."/>
            <person name="Karoui M.E."/>
            <person name="Frapy E."/>
            <person name="Garry L."/>
            <person name="Ghigo J.M."/>
            <person name="Gilles A.M."/>
            <person name="Johnson J."/>
            <person name="Le Bouguenec C."/>
            <person name="Lescat M."/>
            <person name="Mangenot S."/>
            <person name="Martinez-Jehanne V."/>
            <person name="Matic I."/>
            <person name="Nassif X."/>
            <person name="Oztas S."/>
            <person name="Petit M.A."/>
            <person name="Pichon C."/>
            <person name="Rouy Z."/>
            <person name="Ruf C.S."/>
            <person name="Schneider D."/>
            <person name="Tourret J."/>
            <person name="Vacherie B."/>
            <person name="Vallenet D."/>
            <person name="Medigue C."/>
            <person name="Rocha E.P.C."/>
            <person name="Denamur E."/>
        </authorList>
    </citation>
    <scope>NUCLEOTIDE SEQUENCE [LARGE SCALE GENOMIC DNA]</scope>
    <source>
        <strain>UMN026 / ExPEC</strain>
    </source>
</reference>
<dbReference type="EC" id="5.4.3.8" evidence="1"/>
<dbReference type="EMBL" id="CU928163">
    <property type="protein sequence ID" value="CAR11373.1"/>
    <property type="molecule type" value="Genomic_DNA"/>
</dbReference>
<dbReference type="RefSeq" id="WP_000045291.1">
    <property type="nucleotide sequence ID" value="NC_011751.1"/>
</dbReference>
<dbReference type="RefSeq" id="YP_002410929.1">
    <property type="nucleotide sequence ID" value="NC_011751.1"/>
</dbReference>
<dbReference type="SMR" id="B7N823"/>
<dbReference type="STRING" id="585056.ECUMN_0151"/>
<dbReference type="KEGG" id="eum:ECUMN_0151"/>
<dbReference type="PATRIC" id="fig|585056.7.peg.345"/>
<dbReference type="HOGENOM" id="CLU_016922_1_5_6"/>
<dbReference type="UniPathway" id="UPA00251">
    <property type="reaction ID" value="UER00317"/>
</dbReference>
<dbReference type="Proteomes" id="UP000007097">
    <property type="component" value="Chromosome"/>
</dbReference>
<dbReference type="GO" id="GO:0005737">
    <property type="term" value="C:cytoplasm"/>
    <property type="evidence" value="ECO:0007669"/>
    <property type="project" value="UniProtKB-SubCell"/>
</dbReference>
<dbReference type="GO" id="GO:0042286">
    <property type="term" value="F:glutamate-1-semialdehyde 2,1-aminomutase activity"/>
    <property type="evidence" value="ECO:0007669"/>
    <property type="project" value="UniProtKB-UniRule"/>
</dbReference>
<dbReference type="GO" id="GO:0030170">
    <property type="term" value="F:pyridoxal phosphate binding"/>
    <property type="evidence" value="ECO:0007669"/>
    <property type="project" value="InterPro"/>
</dbReference>
<dbReference type="GO" id="GO:0008483">
    <property type="term" value="F:transaminase activity"/>
    <property type="evidence" value="ECO:0007669"/>
    <property type="project" value="InterPro"/>
</dbReference>
<dbReference type="GO" id="GO:0006782">
    <property type="term" value="P:protoporphyrinogen IX biosynthetic process"/>
    <property type="evidence" value="ECO:0007669"/>
    <property type="project" value="UniProtKB-UniRule"/>
</dbReference>
<dbReference type="CDD" id="cd00610">
    <property type="entry name" value="OAT_like"/>
    <property type="match status" value="1"/>
</dbReference>
<dbReference type="FunFam" id="3.40.640.10:FF:000021">
    <property type="entry name" value="Glutamate-1-semialdehyde 2,1-aminomutase"/>
    <property type="match status" value="1"/>
</dbReference>
<dbReference type="FunFam" id="3.90.1150.10:FF:000012">
    <property type="entry name" value="Glutamate-1-semialdehyde 2,1-aminomutase"/>
    <property type="match status" value="1"/>
</dbReference>
<dbReference type="Gene3D" id="3.90.1150.10">
    <property type="entry name" value="Aspartate Aminotransferase, domain 1"/>
    <property type="match status" value="1"/>
</dbReference>
<dbReference type="Gene3D" id="3.40.640.10">
    <property type="entry name" value="Type I PLP-dependent aspartate aminotransferase-like (Major domain)"/>
    <property type="match status" value="1"/>
</dbReference>
<dbReference type="HAMAP" id="MF_00375">
    <property type="entry name" value="HemL_aminotrans_3"/>
    <property type="match status" value="1"/>
</dbReference>
<dbReference type="InterPro" id="IPR004639">
    <property type="entry name" value="4pyrrol_synth_GluAld_NH2Trfase"/>
</dbReference>
<dbReference type="InterPro" id="IPR005814">
    <property type="entry name" value="Aminotrans_3"/>
</dbReference>
<dbReference type="InterPro" id="IPR049704">
    <property type="entry name" value="Aminotrans_3_PPA_site"/>
</dbReference>
<dbReference type="InterPro" id="IPR015424">
    <property type="entry name" value="PyrdxlP-dep_Trfase"/>
</dbReference>
<dbReference type="InterPro" id="IPR015421">
    <property type="entry name" value="PyrdxlP-dep_Trfase_major"/>
</dbReference>
<dbReference type="InterPro" id="IPR015422">
    <property type="entry name" value="PyrdxlP-dep_Trfase_small"/>
</dbReference>
<dbReference type="NCBIfam" id="TIGR00713">
    <property type="entry name" value="hemL"/>
    <property type="match status" value="1"/>
</dbReference>
<dbReference type="NCBIfam" id="NF000818">
    <property type="entry name" value="PRK00062.1"/>
    <property type="match status" value="1"/>
</dbReference>
<dbReference type="PANTHER" id="PTHR43713">
    <property type="entry name" value="GLUTAMATE-1-SEMIALDEHYDE 2,1-AMINOMUTASE"/>
    <property type="match status" value="1"/>
</dbReference>
<dbReference type="PANTHER" id="PTHR43713:SF3">
    <property type="entry name" value="GLUTAMATE-1-SEMIALDEHYDE 2,1-AMINOMUTASE 1, CHLOROPLASTIC-RELATED"/>
    <property type="match status" value="1"/>
</dbReference>
<dbReference type="Pfam" id="PF00202">
    <property type="entry name" value="Aminotran_3"/>
    <property type="match status" value="1"/>
</dbReference>
<dbReference type="SUPFAM" id="SSF53383">
    <property type="entry name" value="PLP-dependent transferases"/>
    <property type="match status" value="1"/>
</dbReference>
<dbReference type="PROSITE" id="PS00600">
    <property type="entry name" value="AA_TRANSFER_CLASS_3"/>
    <property type="match status" value="1"/>
</dbReference>
<name>GSA_ECOLU</name>
<comment type="catalytic activity">
    <reaction evidence="1">
        <text>(S)-4-amino-5-oxopentanoate = 5-aminolevulinate</text>
        <dbReference type="Rhea" id="RHEA:14265"/>
        <dbReference type="ChEBI" id="CHEBI:57501"/>
        <dbReference type="ChEBI" id="CHEBI:356416"/>
        <dbReference type="EC" id="5.4.3.8"/>
    </reaction>
</comment>
<comment type="cofactor">
    <cofactor evidence="1">
        <name>pyridoxal 5'-phosphate</name>
        <dbReference type="ChEBI" id="CHEBI:597326"/>
    </cofactor>
</comment>
<comment type="pathway">
    <text evidence="1">Porphyrin-containing compound metabolism; protoporphyrin-IX biosynthesis; 5-aminolevulinate from L-glutamyl-tRNA(Glu): step 2/2.</text>
</comment>
<comment type="subunit">
    <text evidence="1">Homodimer.</text>
</comment>
<comment type="subcellular location">
    <subcellularLocation>
        <location evidence="1">Cytoplasm</location>
    </subcellularLocation>
</comment>
<comment type="similarity">
    <text evidence="1">Belongs to the class-III pyridoxal-phosphate-dependent aminotransferase family. HemL subfamily.</text>
</comment>
<organism>
    <name type="scientific">Escherichia coli O17:K52:H18 (strain UMN026 / ExPEC)</name>
    <dbReference type="NCBI Taxonomy" id="585056"/>
    <lineage>
        <taxon>Bacteria</taxon>
        <taxon>Pseudomonadati</taxon>
        <taxon>Pseudomonadota</taxon>
        <taxon>Gammaproteobacteria</taxon>
        <taxon>Enterobacterales</taxon>
        <taxon>Enterobacteriaceae</taxon>
        <taxon>Escherichia</taxon>
    </lineage>
</organism>
<accession>B7N823</accession>
<sequence length="426" mass="45370">MSKSENLYSAARELIPGGVNSPVRAFTGVGGTPLFIEKADGAYLYDVDGKAYIDYVGSWGPMVLGHNHPAIRNAVIEAAERGLSFGAPTEMEVKMAQLVTELVPTMDMVRMVNSGTEATMSAIRLARGFTGRDKIIKFEGCYHGHADCLLVKAGSGALTLGQPNSPGVPADFAKHTLTCTYNDLASVRAAFEQYPQEIACIIVEPVAGNMNCVPPLPEFLPGLRALCDEFGALLIIDEVMTGFRVALAGAQDYYGVEPDLTCLGKIIGGGMPVGAFGGRRDVMDALAPTGPVYQAGTLSGNPIAMAAGFACLNEVAQPGVHETLDELTTRLAEGLLEAAEEAGIPLVVNHVGGMFGIFFTDAESVTCYQDVMACDVERFKRFFHMMLDEGVYLAPSAFEAGFMSVAHSMEDINNTIDAARRVFAKL</sequence>
<feature type="chain" id="PRO_1000121884" description="Glutamate-1-semialdehyde 2,1-aminomutase">
    <location>
        <begin position="1"/>
        <end position="426"/>
    </location>
</feature>
<feature type="modified residue" description="N6-(pyridoxal phosphate)lysine" evidence="1">
    <location>
        <position position="265"/>
    </location>
</feature>
<keyword id="KW-0963">Cytoplasm</keyword>
<keyword id="KW-0413">Isomerase</keyword>
<keyword id="KW-0627">Porphyrin biosynthesis</keyword>
<keyword id="KW-0663">Pyridoxal phosphate</keyword>
<gene>
    <name evidence="1" type="primary">hemL</name>
    <name type="ordered locus">ECUMN_0151</name>
</gene>
<evidence type="ECO:0000255" key="1">
    <source>
        <dbReference type="HAMAP-Rule" id="MF_00375"/>
    </source>
</evidence>